<feature type="chain" id="PRO_1000127041" description="UPF0181 protein YoaH">
    <location>
        <begin position="1"/>
        <end position="59"/>
    </location>
</feature>
<reference key="1">
    <citation type="journal article" date="2009" name="PLoS Genet.">
        <title>Organised genome dynamics in the Escherichia coli species results in highly diverse adaptive paths.</title>
        <authorList>
            <person name="Touchon M."/>
            <person name="Hoede C."/>
            <person name="Tenaillon O."/>
            <person name="Barbe V."/>
            <person name="Baeriswyl S."/>
            <person name="Bidet P."/>
            <person name="Bingen E."/>
            <person name="Bonacorsi S."/>
            <person name="Bouchier C."/>
            <person name="Bouvet O."/>
            <person name="Calteau A."/>
            <person name="Chiapello H."/>
            <person name="Clermont O."/>
            <person name="Cruveiller S."/>
            <person name="Danchin A."/>
            <person name="Diard M."/>
            <person name="Dossat C."/>
            <person name="Karoui M.E."/>
            <person name="Frapy E."/>
            <person name="Garry L."/>
            <person name="Ghigo J.M."/>
            <person name="Gilles A.M."/>
            <person name="Johnson J."/>
            <person name="Le Bouguenec C."/>
            <person name="Lescat M."/>
            <person name="Mangenot S."/>
            <person name="Martinez-Jehanne V."/>
            <person name="Matic I."/>
            <person name="Nassif X."/>
            <person name="Oztas S."/>
            <person name="Petit M.A."/>
            <person name="Pichon C."/>
            <person name="Rouy Z."/>
            <person name="Ruf C.S."/>
            <person name="Schneider D."/>
            <person name="Tourret J."/>
            <person name="Vacherie B."/>
            <person name="Vallenet D."/>
            <person name="Medigue C."/>
            <person name="Rocha E.P.C."/>
            <person name="Denamur E."/>
        </authorList>
    </citation>
    <scope>NUCLEOTIDE SEQUENCE [LARGE SCALE GENOMIC DNA]</scope>
    <source>
        <strain>S88 / ExPEC</strain>
    </source>
</reference>
<protein>
    <recommendedName>
        <fullName evidence="1">UPF0181 protein YoaH</fullName>
    </recommendedName>
</protein>
<accession>B7MBL7</accession>
<organism>
    <name type="scientific">Escherichia coli O45:K1 (strain S88 / ExPEC)</name>
    <dbReference type="NCBI Taxonomy" id="585035"/>
    <lineage>
        <taxon>Bacteria</taxon>
        <taxon>Pseudomonadati</taxon>
        <taxon>Pseudomonadota</taxon>
        <taxon>Gammaproteobacteria</taxon>
        <taxon>Enterobacterales</taxon>
        <taxon>Enterobacteriaceae</taxon>
        <taxon>Escherichia</taxon>
    </lineage>
</organism>
<keyword id="KW-1185">Reference proteome</keyword>
<evidence type="ECO:0000255" key="1">
    <source>
        <dbReference type="HAMAP-Rule" id="MF_00507"/>
    </source>
</evidence>
<dbReference type="EMBL" id="CU928161">
    <property type="protein sequence ID" value="CAR03169.1"/>
    <property type="molecule type" value="Genomic_DNA"/>
</dbReference>
<dbReference type="RefSeq" id="WP_000457334.1">
    <property type="nucleotide sequence ID" value="NC_011742.1"/>
</dbReference>
<dbReference type="SMR" id="B7MBL7"/>
<dbReference type="KEGG" id="ecz:ECS88_1863"/>
<dbReference type="HOGENOM" id="CLU_185263_0_0_6"/>
<dbReference type="Proteomes" id="UP000000747">
    <property type="component" value="Chromosome"/>
</dbReference>
<dbReference type="HAMAP" id="MF_00507">
    <property type="entry name" value="UPF0181"/>
    <property type="match status" value="1"/>
</dbReference>
<dbReference type="InterPro" id="IPR005371">
    <property type="entry name" value="UPF0181"/>
</dbReference>
<dbReference type="NCBIfam" id="NF003476">
    <property type="entry name" value="PRK05114.1"/>
    <property type="match status" value="1"/>
</dbReference>
<dbReference type="Pfam" id="PF03701">
    <property type="entry name" value="UPF0181"/>
    <property type="match status" value="1"/>
</dbReference>
<proteinExistence type="inferred from homology"/>
<name>YOAH_ECO45</name>
<gene>
    <name evidence="1" type="primary">yoaH</name>
    <name type="ordered locus">ECS88_1863</name>
</gene>
<sequence>MFAGLPSLTHEQQQKAVERIQELMAQGMSSGQAIALVAEELRANHSGERIVARFEDEDE</sequence>
<comment type="similarity">
    <text evidence="1">Belongs to the UPF0181 family.</text>
</comment>